<feature type="chain" id="PRO_0000191613" description="SERTA domain-containing protein 2">
    <location>
        <begin position="1"/>
        <end position="314"/>
    </location>
</feature>
<feature type="domain" description="SERTA" evidence="1">
    <location>
        <begin position="33"/>
        <end position="80"/>
    </location>
</feature>
<feature type="region of interest" description="Disordered" evidence="2">
    <location>
        <begin position="77"/>
        <end position="119"/>
    </location>
</feature>
<feature type="region of interest" description="Disordered" evidence="2">
    <location>
        <begin position="181"/>
        <end position="222"/>
    </location>
</feature>
<feature type="region of interest" description="Required for transactivation activity">
    <location>
        <begin position="235"/>
        <end position="311"/>
    </location>
</feature>
<feature type="short sequence motif" description="Nuclear export signal (NES)">
    <location>
        <begin position="238"/>
        <end position="243"/>
    </location>
</feature>
<feature type="compositionally biased region" description="Polar residues" evidence="2">
    <location>
        <begin position="87"/>
        <end position="97"/>
    </location>
</feature>
<feature type="compositionally biased region" description="Low complexity" evidence="2">
    <location>
        <begin position="182"/>
        <end position="193"/>
    </location>
</feature>
<feature type="compositionally biased region" description="Basic and acidic residues" evidence="2">
    <location>
        <begin position="210"/>
        <end position="221"/>
    </location>
</feature>
<feature type="mutagenesis site" description="Abolishes the interaction with XPO1 as well as the nuclear export and the subsequent proteasomal degradation." evidence="4">
    <original>L</original>
    <variation>A</variation>
    <location>
        <position position="238"/>
    </location>
</feature>
<feature type="mutagenesis site" description="Slight resistance to proteasomal degradation, no effect on the interaction with XPO1 neither on nuclear export." evidence="4">
    <original>L</original>
    <variation>A</variation>
    <location>
        <position position="241"/>
    </location>
</feature>
<feature type="mutagenesis site" description="Slight decrease of interaction with XPO1 and resistance to proteasomal degradation, no effect on nuclear export." evidence="4">
    <original>L</original>
    <variation>A</variation>
    <location>
        <position position="243"/>
    </location>
</feature>
<name>SRTD2_HUMAN</name>
<sequence>MLGKGGKRKFDEHEDGLEGKIVSPCDGPSKVSYTLQRQTIFNISLMKLYNHRPLTEPSLQKTVLINNMLRRIQEELKQEGSLRPMFTPSSQPTTEPSDSYREAPPAFSHLASPSSHPCDLGSTTPLEACLTPASLLEDDDDTFCTSQAMQPTAPTKLSPPALLPEKDSFSSALDEIEELCPTSTSTEAATAATDSVKGTSSEAGTQKLDGPQESRADDSKLMDSLPGNFEITTSTGFLTDLTLDDILFADIDTSMYDFDPCTSSSGTASKMAPVSADDLLKTLAPYSSQPVTPSQPFKMDLTELDHIMEVLVGS</sequence>
<keyword id="KW-0963">Cytoplasm</keyword>
<keyword id="KW-0539">Nucleus</keyword>
<keyword id="KW-1267">Proteomics identification</keyword>
<keyword id="KW-1185">Reference proteome</keyword>
<keyword id="KW-0804">Transcription</keyword>
<keyword id="KW-0805">Transcription regulation</keyword>
<keyword id="KW-0832">Ubl conjugation</keyword>
<accession>Q14140</accession>
<accession>Q53TS2</accession>
<dbReference type="EMBL" id="D50917">
    <property type="protein sequence ID" value="BAA09476.2"/>
    <property type="status" value="ALT_INIT"/>
    <property type="molecule type" value="mRNA"/>
</dbReference>
<dbReference type="EMBL" id="AC007365">
    <property type="protein sequence ID" value="AAY14766.1"/>
    <property type="molecule type" value="Genomic_DNA"/>
</dbReference>
<dbReference type="EMBL" id="BC074788">
    <property type="protein sequence ID" value="AAH74788.1"/>
    <property type="molecule type" value="mRNA"/>
</dbReference>
<dbReference type="EMBL" id="BC074789">
    <property type="protein sequence ID" value="AAH74789.1"/>
    <property type="molecule type" value="mRNA"/>
</dbReference>
<dbReference type="EMBL" id="BC101639">
    <property type="protein sequence ID" value="AAI01640.1"/>
    <property type="molecule type" value="mRNA"/>
</dbReference>
<dbReference type="EMBL" id="BC101641">
    <property type="protein sequence ID" value="AAI01642.1"/>
    <property type="molecule type" value="mRNA"/>
</dbReference>
<dbReference type="CCDS" id="CCDS33210.1"/>
<dbReference type="RefSeq" id="NP_055570.1">
    <property type="nucleotide sequence ID" value="NM_014755.3"/>
</dbReference>
<dbReference type="RefSeq" id="XP_005264726.1">
    <property type="nucleotide sequence ID" value="XM_005264669.2"/>
</dbReference>
<dbReference type="RefSeq" id="XP_011531507.1">
    <property type="nucleotide sequence ID" value="XM_011533205.2"/>
</dbReference>
<dbReference type="SMR" id="Q14140"/>
<dbReference type="BioGRID" id="115136">
    <property type="interactions" value="37"/>
</dbReference>
<dbReference type="FunCoup" id="Q14140">
    <property type="interactions" value="3190"/>
</dbReference>
<dbReference type="IntAct" id="Q14140">
    <property type="interactions" value="29"/>
</dbReference>
<dbReference type="STRING" id="9606.ENSP00000326933"/>
<dbReference type="GlyGen" id="Q14140">
    <property type="glycosylation" value="2 sites, 1 O-linked glycan (1 site)"/>
</dbReference>
<dbReference type="iPTMnet" id="Q14140"/>
<dbReference type="PhosphoSitePlus" id="Q14140"/>
<dbReference type="BioMuta" id="SERTAD2"/>
<dbReference type="DMDM" id="3123047"/>
<dbReference type="MassIVE" id="Q14140"/>
<dbReference type="PaxDb" id="9606-ENSP00000326933"/>
<dbReference type="PeptideAtlas" id="Q14140"/>
<dbReference type="ProteomicsDB" id="59842"/>
<dbReference type="Antibodypedia" id="16073">
    <property type="antibodies" value="135 antibodies from 17 providers"/>
</dbReference>
<dbReference type="DNASU" id="9792"/>
<dbReference type="Ensembl" id="ENST00000313349.3">
    <property type="protein sequence ID" value="ENSP00000326933.3"/>
    <property type="gene ID" value="ENSG00000179833.4"/>
</dbReference>
<dbReference type="GeneID" id="9792"/>
<dbReference type="KEGG" id="hsa:9792"/>
<dbReference type="MANE-Select" id="ENST00000313349.3">
    <property type="protein sequence ID" value="ENSP00000326933.3"/>
    <property type="RefSeq nucleotide sequence ID" value="NM_014755.3"/>
    <property type="RefSeq protein sequence ID" value="NP_055570.1"/>
</dbReference>
<dbReference type="UCSC" id="uc002sde.3">
    <property type="organism name" value="human"/>
</dbReference>
<dbReference type="AGR" id="HGNC:30784"/>
<dbReference type="CTD" id="9792"/>
<dbReference type="DisGeNET" id="9792"/>
<dbReference type="GeneCards" id="SERTAD2"/>
<dbReference type="HGNC" id="HGNC:30784">
    <property type="gene designation" value="SERTAD2"/>
</dbReference>
<dbReference type="HPA" id="ENSG00000179833">
    <property type="expression patterns" value="Tissue enhanced (bone)"/>
</dbReference>
<dbReference type="MIM" id="617851">
    <property type="type" value="gene"/>
</dbReference>
<dbReference type="neXtProt" id="NX_Q14140"/>
<dbReference type="OpenTargets" id="ENSG00000179833"/>
<dbReference type="PharmGKB" id="PA134948884"/>
<dbReference type="VEuPathDB" id="HostDB:ENSG00000179833"/>
<dbReference type="eggNOG" id="ENOG502QUG8">
    <property type="taxonomic scope" value="Eukaryota"/>
</dbReference>
<dbReference type="GeneTree" id="ENSGT00530000063867"/>
<dbReference type="HOGENOM" id="CLU_065586_0_0_1"/>
<dbReference type="InParanoid" id="Q14140"/>
<dbReference type="OMA" id="FCAVSPP"/>
<dbReference type="OrthoDB" id="8910518at2759"/>
<dbReference type="PAN-GO" id="Q14140">
    <property type="GO annotations" value="2 GO annotations based on evolutionary models"/>
</dbReference>
<dbReference type="PhylomeDB" id="Q14140"/>
<dbReference type="TreeFam" id="TF331620"/>
<dbReference type="PathwayCommons" id="Q14140"/>
<dbReference type="SignaLink" id="Q14140"/>
<dbReference type="BioGRID-ORCS" id="9792">
    <property type="hits" value="19 hits in 1157 CRISPR screens"/>
</dbReference>
<dbReference type="ChiTaRS" id="SERTAD2">
    <property type="organism name" value="human"/>
</dbReference>
<dbReference type="GenomeRNAi" id="9792"/>
<dbReference type="Pharos" id="Q14140">
    <property type="development level" value="Tbio"/>
</dbReference>
<dbReference type="PRO" id="PR:Q14140"/>
<dbReference type="Proteomes" id="UP000005640">
    <property type="component" value="Chromosome 2"/>
</dbReference>
<dbReference type="RNAct" id="Q14140">
    <property type="molecule type" value="protein"/>
</dbReference>
<dbReference type="Bgee" id="ENSG00000179833">
    <property type="expression patterns" value="Expressed in cartilage tissue and 210 other cell types or tissues"/>
</dbReference>
<dbReference type="GO" id="GO:0005737">
    <property type="term" value="C:cytoplasm"/>
    <property type="evidence" value="ECO:0000314"/>
    <property type="project" value="MGI"/>
</dbReference>
<dbReference type="GO" id="GO:0005829">
    <property type="term" value="C:cytosol"/>
    <property type="evidence" value="ECO:0000314"/>
    <property type="project" value="HPA"/>
</dbReference>
<dbReference type="GO" id="GO:0005654">
    <property type="term" value="C:nucleoplasm"/>
    <property type="evidence" value="ECO:0000314"/>
    <property type="project" value="HPA"/>
</dbReference>
<dbReference type="GO" id="GO:0005634">
    <property type="term" value="C:nucleus"/>
    <property type="evidence" value="ECO:0000314"/>
    <property type="project" value="MGI"/>
</dbReference>
<dbReference type="GO" id="GO:0003713">
    <property type="term" value="F:transcription coactivator activity"/>
    <property type="evidence" value="ECO:0000318"/>
    <property type="project" value="GO_Central"/>
</dbReference>
<dbReference type="GO" id="GO:0030308">
    <property type="term" value="P:negative regulation of cell growth"/>
    <property type="evidence" value="ECO:0000314"/>
    <property type="project" value="MGI"/>
</dbReference>
<dbReference type="InterPro" id="IPR052262">
    <property type="entry name" value="E2F-SERTA_domain_protein"/>
</dbReference>
<dbReference type="InterPro" id="IPR009263">
    <property type="entry name" value="SERTA_dom"/>
</dbReference>
<dbReference type="PANTHER" id="PTHR16277">
    <property type="entry name" value="CELL DIVISION CYCLE ASSOCIATED PROTEIN 4/SERTA DOMAIN-CONTAINING PROTEIN 2"/>
    <property type="match status" value="1"/>
</dbReference>
<dbReference type="PANTHER" id="PTHR16277:SF10">
    <property type="entry name" value="SERTA DOMAIN-CONTAINING PROTEIN 2"/>
    <property type="match status" value="1"/>
</dbReference>
<dbReference type="Pfam" id="PF06031">
    <property type="entry name" value="SERTA"/>
    <property type="match status" value="1"/>
</dbReference>
<dbReference type="PROSITE" id="PS51053">
    <property type="entry name" value="SERTA"/>
    <property type="match status" value="1"/>
</dbReference>
<protein>
    <recommendedName>
        <fullName>SERTA domain-containing protein 2</fullName>
    </recommendedName>
    <alternativeName>
        <fullName>Transcriptional regulator interacting with the PHD-bromodomain 2</fullName>
        <shortName>TRIP-Br2</shortName>
    </alternativeName>
</protein>
<evidence type="ECO:0000255" key="1">
    <source>
        <dbReference type="PROSITE-ProRule" id="PRU00396"/>
    </source>
</evidence>
<evidence type="ECO:0000256" key="2">
    <source>
        <dbReference type="SAM" id="MobiDB-lite"/>
    </source>
</evidence>
<evidence type="ECO:0000269" key="3">
    <source>
    </source>
</evidence>
<evidence type="ECO:0000269" key="4">
    <source>
    </source>
</evidence>
<evidence type="ECO:0000269" key="5">
    <source>
    </source>
</evidence>
<evidence type="ECO:0000305" key="6"/>
<comment type="function">
    <text evidence="3">Acts at E2F-responsive promoters as coregulator to integrate signals provided by PHD- and/or bromodomain-containing transcription factors. May act as coactivator as well as corepressor of E2F1-TFDP1 and E2F4-TFDP1 complexes on E2F consensus binding sites, which would activate or inhibit E2F-target genes expression. Modulates fat storage by down-regulating the expression of key genes involved in adipocyte lipolysis, thermogenesis and oxidative metabolism.</text>
</comment>
<comment type="subunit">
    <text evidence="3 4">Interacts with XPO1; which mediates nuclear export. Interacts with TFDP1; modulates transactivation activity of TFDP1/E2F complexes.</text>
</comment>
<comment type="interaction">
    <interactant intactId="EBI-2822051">
        <id>Q14140</id>
    </interactant>
    <interactant intactId="EBI-8643161">
        <id>Q9NX04</id>
        <label>AIRIM</label>
    </interactant>
    <organismsDiffer>false</organismsDiffer>
    <experiments>3</experiments>
</comment>
<comment type="interaction">
    <interactant intactId="EBI-2822051">
        <id>Q14140</id>
    </interactant>
    <interactant intactId="EBI-746742">
        <id>O94817</id>
        <label>ATG12</label>
    </interactant>
    <organismsDiffer>false</organismsDiffer>
    <experiments>3</experiments>
</comment>
<comment type="interaction">
    <interactant intactId="EBI-2822051">
        <id>Q14140</id>
    </interactant>
    <interactant intactId="EBI-374980">
        <id>O00311</id>
        <label>CDC7</label>
    </interactant>
    <organismsDiffer>false</organismsDiffer>
    <experiments>3</experiments>
</comment>
<comment type="interaction">
    <interactant intactId="EBI-2822051">
        <id>Q14140</id>
    </interactant>
    <interactant intactId="EBI-456371">
        <id>P61024</id>
        <label>CKS1B</label>
    </interactant>
    <organismsDiffer>false</organismsDiffer>
    <experiments>3</experiments>
</comment>
<comment type="interaction">
    <interactant intactId="EBI-2822051">
        <id>Q14140</id>
    </interactant>
    <interactant intactId="EBI-11962928">
        <id>Q9UI47-2</id>
        <label>CTNNA3</label>
    </interactant>
    <organismsDiffer>false</organismsDiffer>
    <experiments>3</experiments>
</comment>
<comment type="interaction">
    <interactant intactId="EBI-2822051">
        <id>Q14140</id>
    </interactant>
    <interactant intactId="EBI-12831272">
        <id>Q6ZVH7</id>
        <label>ESPNL</label>
    </interactant>
    <organismsDiffer>false</organismsDiffer>
    <experiments>3</experiments>
</comment>
<comment type="interaction">
    <interactant intactId="EBI-2822051">
        <id>Q14140</id>
    </interactant>
    <interactant intactId="EBI-12003732">
        <id>Q9NRZ9-6</id>
        <label>HELLS</label>
    </interactant>
    <organismsDiffer>false</organismsDiffer>
    <experiments>3</experiments>
</comment>
<comment type="interaction">
    <interactant intactId="EBI-2822051">
        <id>Q14140</id>
    </interactant>
    <interactant intactId="EBI-11955401">
        <id>Q86VF2-5</id>
        <label>IGFN1</label>
    </interactant>
    <organismsDiffer>false</organismsDiffer>
    <experiments>3</experiments>
</comment>
<comment type="interaction">
    <interactant intactId="EBI-2822051">
        <id>Q14140</id>
    </interactant>
    <interactant intactId="EBI-399080">
        <id>Q92993</id>
        <label>KAT5</label>
    </interactant>
    <organismsDiffer>false</organismsDiffer>
    <experiments>3</experiments>
</comment>
<comment type="interaction">
    <interactant intactId="EBI-2822051">
        <id>Q14140</id>
    </interactant>
    <interactant intactId="EBI-3921217">
        <id>Q9HBI0</id>
        <label>PARVG</label>
    </interactant>
    <organismsDiffer>false</organismsDiffer>
    <experiments>3</experiments>
</comment>
<comment type="interaction">
    <interactant intactId="EBI-2822051">
        <id>Q14140</id>
    </interactant>
    <interactant intactId="EBI-79893">
        <id>Q92569</id>
        <label>PIK3R3</label>
    </interactant>
    <organismsDiffer>false</organismsDiffer>
    <experiments>3</experiments>
</comment>
<comment type="interaction">
    <interactant intactId="EBI-2822051">
        <id>Q14140</id>
    </interactant>
    <interactant intactId="EBI-12089905">
        <id>O60733</id>
        <label>PLA2G6</label>
    </interactant>
    <organismsDiffer>false</organismsDiffer>
    <experiments>3</experiments>
</comment>
<comment type="interaction">
    <interactant intactId="EBI-2822051">
        <id>Q14140</id>
    </interactant>
    <interactant intactId="EBI-1053424">
        <id>O43741</id>
        <label>PRKAB2</label>
    </interactant>
    <organismsDiffer>false</organismsDiffer>
    <experiments>3</experiments>
</comment>
<comment type="interaction">
    <interactant intactId="EBI-2822051">
        <id>Q14140</id>
    </interactant>
    <interactant intactId="EBI-12036261">
        <id>Q7Z7C7</id>
        <label>STRA8</label>
    </interactant>
    <organismsDiffer>false</organismsDiffer>
    <experiments>3</experiments>
</comment>
<comment type="interaction">
    <interactant intactId="EBI-2822051">
        <id>Q14140</id>
    </interactant>
    <interactant intactId="EBI-949753">
        <id>Q63HR2</id>
        <label>TNS2</label>
    </interactant>
    <organismsDiffer>false</organismsDiffer>
    <experiments>3</experiments>
</comment>
<comment type="interaction">
    <interactant intactId="EBI-2822051">
        <id>Q14140</id>
    </interactant>
    <interactant intactId="EBI-10283126">
        <id>Q96C55</id>
        <label>ZNF524</label>
    </interactant>
    <organismsDiffer>false</organismsDiffer>
    <experiments>3</experiments>
</comment>
<comment type="interaction">
    <interactant intactId="EBI-2822051">
        <id>Q14140</id>
    </interactant>
    <interactant intactId="EBI-745520">
        <id>Q9P0T4</id>
        <label>ZNF581</label>
    </interactant>
    <organismsDiffer>false</organismsDiffer>
    <experiments>3</experiments>
</comment>
<comment type="interaction">
    <interactant intactId="EBI-2822051">
        <id>Q14140</id>
    </interactant>
    <interactant intactId="EBI-10178224">
        <id>P10073</id>
        <label>ZSCAN22</label>
    </interactant>
    <organismsDiffer>false</organismsDiffer>
    <experiments>3</experiments>
</comment>
<comment type="subcellular location">
    <subcellularLocation>
        <location evidence="4">Nucleus</location>
    </subcellularLocation>
    <subcellularLocation>
        <location evidence="4">Cytoplasm</location>
    </subcellularLocation>
    <text>Exported out of the nucleus via its NES in a XPO1-dependent manner. Once in the cytoplasm, is degraded by the proteasome.</text>
</comment>
<comment type="tissue specificity">
    <text evidence="5">Expressed in adipose tissue.</text>
</comment>
<comment type="developmental stage">
    <text evidence="4">Transcript levels remain constant in all phases of the cell cycle. In contrast, protein levels accumulate at the G1/S phase boundary and decrease progressively through S phase until G2/M phase is reached, residual expression is observed in the G2/M and early G1 phases.</text>
</comment>
<comment type="PTM">
    <text evidence="4">Polyubiquitinated, which promotes proteasomal degradation.</text>
</comment>
<comment type="sequence caution" evidence="6">
    <conflict type="erroneous initiation">
        <sequence resource="EMBL-CDS" id="BAA09476"/>
    </conflict>
    <text>Extended N-terminus.</text>
</comment>
<gene>
    <name type="primary">SERTAD2</name>
    <name type="synonym">KIAA0127</name>
    <name type="synonym">TRIPBR2</name>
</gene>
<proteinExistence type="evidence at protein level"/>
<reference key="1">
    <citation type="journal article" date="1995" name="DNA Res.">
        <title>Prediction of the coding sequences of unidentified human genes. IV. The coding sequences of 40 new genes (KIAA0121-KIAA0160) deduced by analysis of cDNA clones from human cell line KG-1.</title>
        <authorList>
            <person name="Nagase T."/>
            <person name="Seki N."/>
            <person name="Tanaka A."/>
            <person name="Ishikawa K."/>
            <person name="Nomura N."/>
        </authorList>
    </citation>
    <scope>NUCLEOTIDE SEQUENCE [LARGE SCALE MRNA]</scope>
    <source>
        <tissue>Bone marrow</tissue>
    </source>
</reference>
<reference key="2">
    <citation type="journal article" date="2005" name="Nature">
        <title>Generation and annotation of the DNA sequences of human chromosomes 2 and 4.</title>
        <authorList>
            <person name="Hillier L.W."/>
            <person name="Graves T.A."/>
            <person name="Fulton R.S."/>
            <person name="Fulton L.A."/>
            <person name="Pepin K.H."/>
            <person name="Minx P."/>
            <person name="Wagner-McPherson C."/>
            <person name="Layman D."/>
            <person name="Wylie K."/>
            <person name="Sekhon M."/>
            <person name="Becker M.C."/>
            <person name="Fewell G.A."/>
            <person name="Delehaunty K.D."/>
            <person name="Miner T.L."/>
            <person name="Nash W.E."/>
            <person name="Kremitzki C."/>
            <person name="Oddy L."/>
            <person name="Du H."/>
            <person name="Sun H."/>
            <person name="Bradshaw-Cordum H."/>
            <person name="Ali J."/>
            <person name="Carter J."/>
            <person name="Cordes M."/>
            <person name="Harris A."/>
            <person name="Isak A."/>
            <person name="van Brunt A."/>
            <person name="Nguyen C."/>
            <person name="Du F."/>
            <person name="Courtney L."/>
            <person name="Kalicki J."/>
            <person name="Ozersky P."/>
            <person name="Abbott S."/>
            <person name="Armstrong J."/>
            <person name="Belter E.A."/>
            <person name="Caruso L."/>
            <person name="Cedroni M."/>
            <person name="Cotton M."/>
            <person name="Davidson T."/>
            <person name="Desai A."/>
            <person name="Elliott G."/>
            <person name="Erb T."/>
            <person name="Fronick C."/>
            <person name="Gaige T."/>
            <person name="Haakenson W."/>
            <person name="Haglund K."/>
            <person name="Holmes A."/>
            <person name="Harkins R."/>
            <person name="Kim K."/>
            <person name="Kruchowski S.S."/>
            <person name="Strong C.M."/>
            <person name="Grewal N."/>
            <person name="Goyea E."/>
            <person name="Hou S."/>
            <person name="Levy A."/>
            <person name="Martinka S."/>
            <person name="Mead K."/>
            <person name="McLellan M.D."/>
            <person name="Meyer R."/>
            <person name="Randall-Maher J."/>
            <person name="Tomlinson C."/>
            <person name="Dauphin-Kohlberg S."/>
            <person name="Kozlowicz-Reilly A."/>
            <person name="Shah N."/>
            <person name="Swearengen-Shahid S."/>
            <person name="Snider J."/>
            <person name="Strong J.T."/>
            <person name="Thompson J."/>
            <person name="Yoakum M."/>
            <person name="Leonard S."/>
            <person name="Pearman C."/>
            <person name="Trani L."/>
            <person name="Radionenko M."/>
            <person name="Waligorski J.E."/>
            <person name="Wang C."/>
            <person name="Rock S.M."/>
            <person name="Tin-Wollam A.-M."/>
            <person name="Maupin R."/>
            <person name="Latreille P."/>
            <person name="Wendl M.C."/>
            <person name="Yang S.-P."/>
            <person name="Pohl C."/>
            <person name="Wallis J.W."/>
            <person name="Spieth J."/>
            <person name="Bieri T.A."/>
            <person name="Berkowicz N."/>
            <person name="Nelson J.O."/>
            <person name="Osborne J."/>
            <person name="Ding L."/>
            <person name="Meyer R."/>
            <person name="Sabo A."/>
            <person name="Shotland Y."/>
            <person name="Sinha P."/>
            <person name="Wohldmann P.E."/>
            <person name="Cook L.L."/>
            <person name="Hickenbotham M.T."/>
            <person name="Eldred J."/>
            <person name="Williams D."/>
            <person name="Jones T.A."/>
            <person name="She X."/>
            <person name="Ciccarelli F.D."/>
            <person name="Izaurralde E."/>
            <person name="Taylor J."/>
            <person name="Schmutz J."/>
            <person name="Myers R.M."/>
            <person name="Cox D.R."/>
            <person name="Huang X."/>
            <person name="McPherson J.D."/>
            <person name="Mardis E.R."/>
            <person name="Clifton S.W."/>
            <person name="Warren W.C."/>
            <person name="Chinwalla A.T."/>
            <person name="Eddy S.R."/>
            <person name="Marra M.A."/>
            <person name="Ovcharenko I."/>
            <person name="Furey T.S."/>
            <person name="Miller W."/>
            <person name="Eichler E.E."/>
            <person name="Bork P."/>
            <person name="Suyama M."/>
            <person name="Torrents D."/>
            <person name="Waterston R.H."/>
            <person name="Wilson R.K."/>
        </authorList>
    </citation>
    <scope>NUCLEOTIDE SEQUENCE [LARGE SCALE GENOMIC DNA]</scope>
</reference>
<reference key="3">
    <citation type="journal article" date="2004" name="Genome Res.">
        <title>The status, quality, and expansion of the NIH full-length cDNA project: the Mammalian Gene Collection (MGC).</title>
        <authorList>
            <consortium name="The MGC Project Team"/>
        </authorList>
    </citation>
    <scope>NUCLEOTIDE SEQUENCE [LARGE SCALE MRNA]</scope>
    <source>
        <tissue>Brain</tissue>
        <tissue>Brain cortex</tissue>
    </source>
</reference>
<reference key="4">
    <citation type="journal article" date="2001" name="EMBO J.">
        <title>TRIP-Br: a novel family of PHD zinc finger- and bromodomain-interacting proteins that regulate the transcriptional activity of E2F-1/DP-1.</title>
        <authorList>
            <person name="Hsu S.-I."/>
            <person name="Yang C.M."/>
            <person name="Sim K.G."/>
            <person name="Hentschel D.M."/>
            <person name="O'Leary E."/>
            <person name="Bonventre J.V."/>
        </authorList>
    </citation>
    <scope>FUNCTION AS COREGULATOR</scope>
    <scope>INTERACTION WITH TFDP1</scope>
</reference>
<reference key="5">
    <citation type="journal article" date="2008" name="J. Biol. Chem.">
        <title>CRM1-mediated nuclear export is required for 26 S proteasome-dependent degradation of the TRIP-Br2 proto-oncoprotein.</title>
        <authorList>
            <person name="Cheong J.K."/>
            <person name="Gunaratnam L."/>
            <person name="Hsu S.I."/>
        </authorList>
    </citation>
    <scope>INTERACTION WITH XPO1</scope>
    <scope>DEVELOPMENTAL STAGE</scope>
    <scope>NUCLEAR EXPORT SIGNAL</scope>
    <scope>UBIQUITINATION</scope>
    <scope>SUBCELLULAR LOCATION</scope>
    <scope>MUTAGENESIS OF LEU-238; LEU-241 AND LEU-243</scope>
</reference>
<reference key="6">
    <citation type="journal article" date="2013" name="Nat. Med.">
        <title>Ablation of TRIP-Br2, a regulator of fat lipolysis, thermogenesis and oxidative metabolism, prevents diet-induced obesity and insulin resistance.</title>
        <authorList>
            <person name="Liew C.W."/>
            <person name="Boucher J."/>
            <person name="Cheong J.K."/>
            <person name="Vernochet C."/>
            <person name="Koh H.J."/>
            <person name="Mallol C."/>
            <person name="Townsend K."/>
            <person name="Langin D."/>
            <person name="Kawamori D."/>
            <person name="Hu J."/>
            <person name="Tseng Y.H."/>
            <person name="Hellerstein M.K."/>
            <person name="Farmer S.R."/>
            <person name="Goodyear L."/>
            <person name="Doria A."/>
            <person name="Blueher M."/>
            <person name="Hsu S.I."/>
            <person name="Kulkarni R.N."/>
        </authorList>
    </citation>
    <scope>TISSUE SPECIFICITY</scope>
</reference>
<organism>
    <name type="scientific">Homo sapiens</name>
    <name type="common">Human</name>
    <dbReference type="NCBI Taxonomy" id="9606"/>
    <lineage>
        <taxon>Eukaryota</taxon>
        <taxon>Metazoa</taxon>
        <taxon>Chordata</taxon>
        <taxon>Craniata</taxon>
        <taxon>Vertebrata</taxon>
        <taxon>Euteleostomi</taxon>
        <taxon>Mammalia</taxon>
        <taxon>Eutheria</taxon>
        <taxon>Euarchontoglires</taxon>
        <taxon>Primates</taxon>
        <taxon>Haplorrhini</taxon>
        <taxon>Catarrhini</taxon>
        <taxon>Hominidae</taxon>
        <taxon>Homo</taxon>
    </lineage>
</organism>